<evidence type="ECO:0000250" key="1">
    <source>
        <dbReference type="UniProtKB" id="P04285"/>
    </source>
</evidence>
<evidence type="ECO:0000250" key="2">
    <source>
        <dbReference type="UniProtKB" id="P76027"/>
    </source>
</evidence>
<evidence type="ECO:0000255" key="3">
    <source>
        <dbReference type="PROSITE-ProRule" id="PRU00434"/>
    </source>
</evidence>
<evidence type="ECO:0000305" key="4"/>
<organism>
    <name type="scientific">Haemophilus influenzae (strain ATCC 51907 / DSM 11121 / KW20 / Rd)</name>
    <dbReference type="NCBI Taxonomy" id="71421"/>
    <lineage>
        <taxon>Bacteria</taxon>
        <taxon>Pseudomonadati</taxon>
        <taxon>Pseudomonadota</taxon>
        <taxon>Gammaproteobacteria</taxon>
        <taxon>Pasteurellales</taxon>
        <taxon>Pasteurellaceae</taxon>
        <taxon>Haemophilus</taxon>
    </lineage>
</organism>
<proteinExistence type="inferred from homology"/>
<reference key="1">
    <citation type="journal article" date="1995" name="Science">
        <title>Whole-genome random sequencing and assembly of Haemophilus influenzae Rd.</title>
        <authorList>
            <person name="Fleischmann R.D."/>
            <person name="Adams M.D."/>
            <person name="White O."/>
            <person name="Clayton R.A."/>
            <person name="Kirkness E.F."/>
            <person name="Kerlavage A.R."/>
            <person name="Bult C.J."/>
            <person name="Tomb J.-F."/>
            <person name="Dougherty B.A."/>
            <person name="Merrick J.M."/>
            <person name="McKenney K."/>
            <person name="Sutton G.G."/>
            <person name="FitzHugh W."/>
            <person name="Fields C.A."/>
            <person name="Gocayne J.D."/>
            <person name="Scott J.D."/>
            <person name="Shirley R."/>
            <person name="Liu L.-I."/>
            <person name="Glodek A."/>
            <person name="Kelley J.M."/>
            <person name="Weidman J.F."/>
            <person name="Phillips C.A."/>
            <person name="Spriggs T."/>
            <person name="Hedblom E."/>
            <person name="Cotton M.D."/>
            <person name="Utterback T.R."/>
            <person name="Hanna M.C."/>
            <person name="Nguyen D.T."/>
            <person name="Saudek D.M."/>
            <person name="Brandon R.C."/>
            <person name="Fine L.D."/>
            <person name="Fritchman J.L."/>
            <person name="Fuhrmann J.L."/>
            <person name="Geoghagen N.S.M."/>
            <person name="Gnehm C.L."/>
            <person name="McDonald L.A."/>
            <person name="Small K.V."/>
            <person name="Fraser C.M."/>
            <person name="Smith H.O."/>
            <person name="Venter J.C."/>
        </authorList>
    </citation>
    <scope>NUCLEOTIDE SEQUENCE [LARGE SCALE GENOMIC DNA]</scope>
    <source>
        <strain>ATCC 51907 / DSM 11121 / KW20 / Rd</strain>
    </source>
</reference>
<name>OPPD_HAEIN</name>
<protein>
    <recommendedName>
        <fullName evidence="4">Oligopeptide transport ATP-binding protein OppD</fullName>
        <ecNumber evidence="2">7.4.2.6</ecNumber>
    </recommendedName>
</protein>
<sequence length="323" mass="35721">MNPLLDVKNLYVRFKTPDGVVTAVNDLNFTLNAGSTLGIVGESGSGKSQTAFALMGLLAANGEVEGSAIFEGKELVNLPNAELNKIRAEQISMIFQDPMTSLNPYMKIGEQLMEVLQLHKGYDKQTAFAESVKMLDAVKMPEAKKRMGMYPHEFSGGMRQRVMIAMALLCRPKLLIADEPTTALDVTVQAQIMTLLNELKREFNTAIIMITHDLGVVAGICDQVMVMYAGRTMEYGTAEQIFYHPTHPYSIGLMDAIPRLDGNEEHLVTIPGNPPNLLHLPKGCPFSPRCQFATEQCQIAPKLTTFNHGQLRNCWLSAEKFNL</sequence>
<accession>P45052</accession>
<dbReference type="EC" id="7.4.2.6" evidence="2"/>
<dbReference type="EMBL" id="L42023">
    <property type="protein sequence ID" value="AAC22775.1"/>
    <property type="molecule type" value="Genomic_DNA"/>
</dbReference>
<dbReference type="PIR" id="C64184">
    <property type="entry name" value="C64184"/>
</dbReference>
<dbReference type="RefSeq" id="NP_439278.1">
    <property type="nucleotide sequence ID" value="NC_000907.1"/>
</dbReference>
<dbReference type="SMR" id="P45052"/>
<dbReference type="STRING" id="71421.HI_1121"/>
<dbReference type="EnsemblBacteria" id="AAC22775">
    <property type="protein sequence ID" value="AAC22775"/>
    <property type="gene ID" value="HI_1121"/>
</dbReference>
<dbReference type="KEGG" id="hin:HI_1121"/>
<dbReference type="PATRIC" id="fig|71421.8.peg.1170"/>
<dbReference type="eggNOG" id="COG0444">
    <property type="taxonomic scope" value="Bacteria"/>
</dbReference>
<dbReference type="HOGENOM" id="CLU_000604_1_23_6"/>
<dbReference type="OrthoDB" id="9784450at2"/>
<dbReference type="PhylomeDB" id="P45052"/>
<dbReference type="BioCyc" id="HINF71421:G1GJ1-1156-MONOMER"/>
<dbReference type="Proteomes" id="UP000000579">
    <property type="component" value="Chromosome"/>
</dbReference>
<dbReference type="GO" id="GO:0005886">
    <property type="term" value="C:plasma membrane"/>
    <property type="evidence" value="ECO:0007669"/>
    <property type="project" value="UniProtKB-SubCell"/>
</dbReference>
<dbReference type="GO" id="GO:0005524">
    <property type="term" value="F:ATP binding"/>
    <property type="evidence" value="ECO:0007669"/>
    <property type="project" value="UniProtKB-KW"/>
</dbReference>
<dbReference type="GO" id="GO:0016887">
    <property type="term" value="F:ATP hydrolysis activity"/>
    <property type="evidence" value="ECO:0007669"/>
    <property type="project" value="InterPro"/>
</dbReference>
<dbReference type="GO" id="GO:0015833">
    <property type="term" value="P:peptide transport"/>
    <property type="evidence" value="ECO:0007669"/>
    <property type="project" value="UniProtKB-KW"/>
</dbReference>
<dbReference type="GO" id="GO:0015031">
    <property type="term" value="P:protein transport"/>
    <property type="evidence" value="ECO:0007669"/>
    <property type="project" value="UniProtKB-KW"/>
</dbReference>
<dbReference type="CDD" id="cd03257">
    <property type="entry name" value="ABC_NikE_OppD_transporters"/>
    <property type="match status" value="1"/>
</dbReference>
<dbReference type="FunFam" id="3.40.50.300:FF:000016">
    <property type="entry name" value="Oligopeptide ABC transporter ATP-binding component"/>
    <property type="match status" value="1"/>
</dbReference>
<dbReference type="Gene3D" id="3.40.50.300">
    <property type="entry name" value="P-loop containing nucleotide triphosphate hydrolases"/>
    <property type="match status" value="1"/>
</dbReference>
<dbReference type="InterPro" id="IPR003593">
    <property type="entry name" value="AAA+_ATPase"/>
</dbReference>
<dbReference type="InterPro" id="IPR050388">
    <property type="entry name" value="ABC_Ni/Peptide_Import"/>
</dbReference>
<dbReference type="InterPro" id="IPR003439">
    <property type="entry name" value="ABC_transporter-like_ATP-bd"/>
</dbReference>
<dbReference type="InterPro" id="IPR017871">
    <property type="entry name" value="ABC_transporter-like_CS"/>
</dbReference>
<dbReference type="InterPro" id="IPR013563">
    <property type="entry name" value="Oligopep_ABC_C"/>
</dbReference>
<dbReference type="InterPro" id="IPR027417">
    <property type="entry name" value="P-loop_NTPase"/>
</dbReference>
<dbReference type="NCBIfam" id="TIGR01727">
    <property type="entry name" value="oligo_HPY"/>
    <property type="match status" value="1"/>
</dbReference>
<dbReference type="NCBIfam" id="NF007010">
    <property type="entry name" value="PRK09473.1"/>
    <property type="match status" value="1"/>
</dbReference>
<dbReference type="PANTHER" id="PTHR43297:SF7">
    <property type="entry name" value="D,D-DIPEPTIDE TRANSPORT ATP-BINDING PROTEIN DDPD-RELATED"/>
    <property type="match status" value="1"/>
</dbReference>
<dbReference type="PANTHER" id="PTHR43297">
    <property type="entry name" value="OLIGOPEPTIDE TRANSPORT ATP-BINDING PROTEIN APPD"/>
    <property type="match status" value="1"/>
</dbReference>
<dbReference type="Pfam" id="PF00005">
    <property type="entry name" value="ABC_tran"/>
    <property type="match status" value="1"/>
</dbReference>
<dbReference type="Pfam" id="PF08352">
    <property type="entry name" value="oligo_HPY"/>
    <property type="match status" value="1"/>
</dbReference>
<dbReference type="SMART" id="SM00382">
    <property type="entry name" value="AAA"/>
    <property type="match status" value="1"/>
</dbReference>
<dbReference type="SUPFAM" id="SSF52540">
    <property type="entry name" value="P-loop containing nucleoside triphosphate hydrolases"/>
    <property type="match status" value="1"/>
</dbReference>
<dbReference type="PROSITE" id="PS00211">
    <property type="entry name" value="ABC_TRANSPORTER_1"/>
    <property type="match status" value="1"/>
</dbReference>
<dbReference type="PROSITE" id="PS50893">
    <property type="entry name" value="ABC_TRANSPORTER_2"/>
    <property type="match status" value="1"/>
</dbReference>
<comment type="function">
    <text evidence="2">Part of the ABC transporter complex OppABCDF involved in the uptake of oligopeptides (By similarity). Probably responsible for energy coupling to the transport system (By similarity).</text>
</comment>
<comment type="catalytic activity">
    <reaction evidence="2">
        <text>a [peptide](out) + ATP + H2O = a [peptide](in) + ADP + phosphate + H(+)</text>
        <dbReference type="Rhea" id="RHEA:78459"/>
        <dbReference type="Rhea" id="RHEA-COMP:19083"/>
        <dbReference type="ChEBI" id="CHEBI:15377"/>
        <dbReference type="ChEBI" id="CHEBI:15378"/>
        <dbReference type="ChEBI" id="CHEBI:30616"/>
        <dbReference type="ChEBI" id="CHEBI:33710"/>
        <dbReference type="ChEBI" id="CHEBI:43474"/>
        <dbReference type="ChEBI" id="CHEBI:456216"/>
        <dbReference type="EC" id="7.4.2.6"/>
    </reaction>
    <physiologicalReaction direction="left-to-right" evidence="2">
        <dbReference type="Rhea" id="RHEA:78460"/>
    </physiologicalReaction>
</comment>
<comment type="subunit">
    <text evidence="2">The complex is composed of two ATP-binding proteins (OppD and OppF), two transmembrane proteins (OppB and OppC) and a solute-binding protein (OppA or MppA).</text>
</comment>
<comment type="subcellular location">
    <subcellularLocation>
        <location evidence="1">Cell inner membrane</location>
        <topology evidence="1">Peripheral membrane protein</topology>
    </subcellularLocation>
</comment>
<comment type="similarity">
    <text evidence="4">Belongs to the ABC transporter superfamily.</text>
</comment>
<gene>
    <name type="primary">oppD</name>
    <name type="ordered locus">HI_1121</name>
</gene>
<feature type="chain" id="PRO_0000092660" description="Oligopeptide transport ATP-binding protein OppD">
    <location>
        <begin position="1"/>
        <end position="323"/>
    </location>
</feature>
<feature type="domain" description="ABC transporter" evidence="3">
    <location>
        <begin position="5"/>
        <end position="254"/>
    </location>
</feature>
<feature type="binding site" evidence="3">
    <location>
        <begin position="41"/>
        <end position="48"/>
    </location>
    <ligand>
        <name>ATP</name>
        <dbReference type="ChEBI" id="CHEBI:30616"/>
    </ligand>
</feature>
<keyword id="KW-0067">ATP-binding</keyword>
<keyword id="KW-0997">Cell inner membrane</keyword>
<keyword id="KW-1003">Cell membrane</keyword>
<keyword id="KW-0472">Membrane</keyword>
<keyword id="KW-0547">Nucleotide-binding</keyword>
<keyword id="KW-0571">Peptide transport</keyword>
<keyword id="KW-0653">Protein transport</keyword>
<keyword id="KW-1185">Reference proteome</keyword>
<keyword id="KW-1278">Translocase</keyword>
<keyword id="KW-0813">Transport</keyword>